<comment type="similarity">
    <text evidence="1">Belongs to the UPF0319 family.</text>
</comment>
<proteinExistence type="inferred from homology"/>
<name>Y1002_ACTSZ</name>
<dbReference type="EMBL" id="CP000746">
    <property type="protein sequence ID" value="ABR74370.1"/>
    <property type="molecule type" value="Genomic_DNA"/>
</dbReference>
<dbReference type="RefSeq" id="WP_012072747.1">
    <property type="nucleotide sequence ID" value="NC_009655.1"/>
</dbReference>
<dbReference type="STRING" id="339671.Asuc_1002"/>
<dbReference type="KEGG" id="asu:Asuc_1002"/>
<dbReference type="eggNOG" id="COG3110">
    <property type="taxonomic scope" value="Bacteria"/>
</dbReference>
<dbReference type="HOGENOM" id="CLU_073782_2_0_6"/>
<dbReference type="OrthoDB" id="6428208at2"/>
<dbReference type="Proteomes" id="UP000001114">
    <property type="component" value="Chromosome"/>
</dbReference>
<dbReference type="HAMAP" id="MF_00789">
    <property type="entry name" value="UPF0319"/>
    <property type="match status" value="1"/>
</dbReference>
<dbReference type="InterPro" id="IPR018635">
    <property type="entry name" value="UPF0319"/>
</dbReference>
<dbReference type="NCBIfam" id="NF002516">
    <property type="entry name" value="PRK01904.1"/>
    <property type="match status" value="1"/>
</dbReference>
<dbReference type="PANTHER" id="PTHR38108">
    <property type="entry name" value="UPF0319 PROTEIN YCCT"/>
    <property type="match status" value="1"/>
</dbReference>
<dbReference type="PANTHER" id="PTHR38108:SF1">
    <property type="entry name" value="UPF0319 PROTEIN YCCT"/>
    <property type="match status" value="1"/>
</dbReference>
<dbReference type="Pfam" id="PF09829">
    <property type="entry name" value="DUF2057"/>
    <property type="match status" value="1"/>
</dbReference>
<gene>
    <name type="ordered locus">Asuc_1002</name>
</gene>
<sequence length="220" mass="23995">MKFRLAAVAAAALLASSASFAGMVTGSSNIDFLAVDGQKANRSLLKETRSFNINDTHTHQVVVRVSELIREGSDRTLFESDPIVVTFQGSTEDIRISAPRLTNEREANNFKANPKITVKTVSGAEIASKQDYLKQEGFLPGVNLEENLSNYNQSGATASVAGFATASMPATVGTVQNGKVKKGKVTVQGENAAEQMLQYWYQQADKETQERFLNWVKTQK</sequence>
<organism>
    <name type="scientific">Actinobacillus succinogenes (strain ATCC 55618 / DSM 22257 / CCUG 43843 / 130Z)</name>
    <dbReference type="NCBI Taxonomy" id="339671"/>
    <lineage>
        <taxon>Bacteria</taxon>
        <taxon>Pseudomonadati</taxon>
        <taxon>Pseudomonadota</taxon>
        <taxon>Gammaproteobacteria</taxon>
        <taxon>Pasteurellales</taxon>
        <taxon>Pasteurellaceae</taxon>
        <taxon>Actinobacillus</taxon>
    </lineage>
</organism>
<keyword id="KW-1185">Reference proteome</keyword>
<keyword id="KW-0732">Signal</keyword>
<accession>A6VN23</accession>
<reference key="1">
    <citation type="journal article" date="2010" name="BMC Genomics">
        <title>A genomic perspective on the potential of Actinobacillus succinogenes for industrial succinate production.</title>
        <authorList>
            <person name="McKinlay J.B."/>
            <person name="Laivenieks M."/>
            <person name="Schindler B.D."/>
            <person name="McKinlay A.A."/>
            <person name="Siddaramappa S."/>
            <person name="Challacombe J.F."/>
            <person name="Lowry S.R."/>
            <person name="Clum A."/>
            <person name="Lapidus A.L."/>
            <person name="Burkhart K.B."/>
            <person name="Harkins V."/>
            <person name="Vieille C."/>
        </authorList>
    </citation>
    <scope>NUCLEOTIDE SEQUENCE [LARGE SCALE GENOMIC DNA]</scope>
    <source>
        <strain>ATCC 55618 / DSM 22257 / CCUG 43843 / 130Z</strain>
    </source>
</reference>
<feature type="signal peptide" evidence="1">
    <location>
        <begin position="1"/>
        <end position="21"/>
    </location>
</feature>
<feature type="chain" id="PRO_5000258818" description="UPF0319 protein Asuc_1002">
    <location>
        <begin position="22"/>
        <end position="220"/>
    </location>
</feature>
<protein>
    <recommendedName>
        <fullName evidence="1">UPF0319 protein Asuc_1002</fullName>
    </recommendedName>
</protein>
<evidence type="ECO:0000255" key="1">
    <source>
        <dbReference type="HAMAP-Rule" id="MF_00789"/>
    </source>
</evidence>